<feature type="propeptide" id="PRO_0000397390" description="Removed in mature form; by autocatalysis" evidence="1">
    <location>
        <begin position="1"/>
        <end position="7"/>
    </location>
</feature>
<feature type="chain" id="PRO_0000397391" description="Proteasome subunit beta">
    <location>
        <begin position="8"/>
        <end position="210"/>
    </location>
</feature>
<feature type="active site" description="Nucleophile" evidence="1">
    <location>
        <position position="8"/>
    </location>
</feature>
<proteinExistence type="inferred from homology"/>
<gene>
    <name evidence="1" type="primary">psmB</name>
    <name type="ordered locus">PTO0686</name>
</gene>
<sequence length="210" mass="23041">MEVLKTGTTTVGITAGDYVIMGTDSRATMENFISNKNAQKLYQIDNYAAMTIAGLVGDAQVLVRYMKAEMELYRVQRKVSMPIDAAATLLSNMLNQTKFYPYMVQLLVGGYDTKPHIFSIDAAGGSVEDIYASTGSGSPFVYGVLEAEYQKNMSLDDGINLVIKAISAAKQRDSASGNMLQLGVVDPKKGFYYLSEDEILSRLKKLKLQL</sequence>
<protein>
    <recommendedName>
        <fullName evidence="1">Proteasome subunit beta</fullName>
        <ecNumber evidence="1">3.4.25.1</ecNumber>
    </recommendedName>
    <alternativeName>
        <fullName evidence="1">20S proteasome beta subunit</fullName>
    </alternativeName>
    <alternativeName>
        <fullName evidence="1">Proteasome core protein PsmB</fullName>
    </alternativeName>
</protein>
<accession>Q6L181</accession>
<organism>
    <name type="scientific">Picrophilus torridus (strain ATCC 700027 / DSM 9790 / JCM 10055 / NBRC 100828 / KAW 2/3)</name>
    <dbReference type="NCBI Taxonomy" id="1122961"/>
    <lineage>
        <taxon>Archaea</taxon>
        <taxon>Methanobacteriati</taxon>
        <taxon>Thermoplasmatota</taxon>
        <taxon>Thermoplasmata</taxon>
        <taxon>Thermoplasmatales</taxon>
        <taxon>Picrophilaceae</taxon>
        <taxon>Picrophilus</taxon>
    </lineage>
</organism>
<evidence type="ECO:0000255" key="1">
    <source>
        <dbReference type="HAMAP-Rule" id="MF_02113"/>
    </source>
</evidence>
<name>PSB_PICTO</name>
<reference key="1">
    <citation type="journal article" date="2004" name="Proc. Natl. Acad. Sci. U.S.A.">
        <title>Genome sequence of Picrophilus torridus and its implications for life around pH 0.</title>
        <authorList>
            <person name="Fuetterer O."/>
            <person name="Angelov A."/>
            <person name="Liesegang H."/>
            <person name="Gottschalk G."/>
            <person name="Schleper C."/>
            <person name="Schepers B."/>
            <person name="Dock C."/>
            <person name="Antranikian G."/>
            <person name="Liebl W."/>
        </authorList>
    </citation>
    <scope>NUCLEOTIDE SEQUENCE [LARGE SCALE GENOMIC DNA]</scope>
    <source>
        <strain>ATCC 700027 / DSM 9790 / JCM 10055 / NBRC 100828 / KAW 2/3</strain>
    </source>
</reference>
<keyword id="KW-0068">Autocatalytic cleavage</keyword>
<keyword id="KW-0963">Cytoplasm</keyword>
<keyword id="KW-0378">Hydrolase</keyword>
<keyword id="KW-0645">Protease</keyword>
<keyword id="KW-0647">Proteasome</keyword>
<keyword id="KW-0888">Threonine protease</keyword>
<keyword id="KW-0865">Zymogen</keyword>
<dbReference type="EC" id="3.4.25.1" evidence="1"/>
<dbReference type="EMBL" id="AE017261">
    <property type="protein sequence ID" value="AAT43271.1"/>
    <property type="molecule type" value="Genomic_DNA"/>
</dbReference>
<dbReference type="RefSeq" id="WP_011177487.1">
    <property type="nucleotide sequence ID" value="NC_005877.1"/>
</dbReference>
<dbReference type="SMR" id="Q6L181"/>
<dbReference type="FunCoup" id="Q6L181">
    <property type="interactions" value="190"/>
</dbReference>
<dbReference type="STRING" id="263820.PTO0686"/>
<dbReference type="MEROPS" id="T01.002"/>
<dbReference type="PaxDb" id="263820-PTO0686"/>
<dbReference type="GeneID" id="2844650"/>
<dbReference type="KEGG" id="pto:PTO0686"/>
<dbReference type="PATRIC" id="fig|263820.9.peg.721"/>
<dbReference type="eggNOG" id="arCOG00970">
    <property type="taxonomic scope" value="Archaea"/>
</dbReference>
<dbReference type="HOGENOM" id="CLU_035750_7_2_2"/>
<dbReference type="InParanoid" id="Q6L181"/>
<dbReference type="OrthoDB" id="6330at2157"/>
<dbReference type="Proteomes" id="UP000000438">
    <property type="component" value="Chromosome"/>
</dbReference>
<dbReference type="GO" id="GO:0005737">
    <property type="term" value="C:cytoplasm"/>
    <property type="evidence" value="ECO:0007669"/>
    <property type="project" value="UniProtKB-SubCell"/>
</dbReference>
<dbReference type="GO" id="GO:0019774">
    <property type="term" value="C:proteasome core complex, beta-subunit complex"/>
    <property type="evidence" value="ECO:0007669"/>
    <property type="project" value="UniProtKB-UniRule"/>
</dbReference>
<dbReference type="GO" id="GO:0004298">
    <property type="term" value="F:threonine-type endopeptidase activity"/>
    <property type="evidence" value="ECO:0007669"/>
    <property type="project" value="UniProtKB-UniRule"/>
</dbReference>
<dbReference type="GO" id="GO:0010498">
    <property type="term" value="P:proteasomal protein catabolic process"/>
    <property type="evidence" value="ECO:0007669"/>
    <property type="project" value="UniProtKB-UniRule"/>
</dbReference>
<dbReference type="FunFam" id="3.60.20.10:FF:000049">
    <property type="entry name" value="Proteasome subunit beta"/>
    <property type="match status" value="1"/>
</dbReference>
<dbReference type="Gene3D" id="3.60.20.10">
    <property type="entry name" value="Glutamine Phosphoribosylpyrophosphate, subunit 1, domain 1"/>
    <property type="match status" value="1"/>
</dbReference>
<dbReference type="HAMAP" id="MF_02113_A">
    <property type="entry name" value="Proteasome_B_A"/>
    <property type="match status" value="1"/>
</dbReference>
<dbReference type="InterPro" id="IPR029055">
    <property type="entry name" value="Ntn_hydrolases_N"/>
</dbReference>
<dbReference type="InterPro" id="IPR019983">
    <property type="entry name" value="Pept_T1A_Psome_bsu_arc"/>
</dbReference>
<dbReference type="InterPro" id="IPR000243">
    <property type="entry name" value="Pept_T1A_subB"/>
</dbReference>
<dbReference type="InterPro" id="IPR016050">
    <property type="entry name" value="Proteasome_bsu_CS"/>
</dbReference>
<dbReference type="InterPro" id="IPR001353">
    <property type="entry name" value="Proteasome_sua/b"/>
</dbReference>
<dbReference type="InterPro" id="IPR023333">
    <property type="entry name" value="Proteasome_suB-type"/>
</dbReference>
<dbReference type="NCBIfam" id="TIGR03634">
    <property type="entry name" value="arc_protsome_B"/>
    <property type="match status" value="1"/>
</dbReference>
<dbReference type="PANTHER" id="PTHR32194:SF0">
    <property type="entry name" value="ATP-DEPENDENT PROTEASE SUBUNIT HSLV"/>
    <property type="match status" value="1"/>
</dbReference>
<dbReference type="PANTHER" id="PTHR32194">
    <property type="entry name" value="METALLOPROTEASE TLDD"/>
    <property type="match status" value="1"/>
</dbReference>
<dbReference type="Pfam" id="PF00227">
    <property type="entry name" value="Proteasome"/>
    <property type="match status" value="1"/>
</dbReference>
<dbReference type="PRINTS" id="PR00141">
    <property type="entry name" value="PROTEASOME"/>
</dbReference>
<dbReference type="SUPFAM" id="SSF56235">
    <property type="entry name" value="N-terminal nucleophile aminohydrolases (Ntn hydrolases)"/>
    <property type="match status" value="1"/>
</dbReference>
<dbReference type="PROSITE" id="PS00854">
    <property type="entry name" value="PROTEASOME_BETA_1"/>
    <property type="match status" value="1"/>
</dbReference>
<dbReference type="PROSITE" id="PS51476">
    <property type="entry name" value="PROTEASOME_BETA_2"/>
    <property type="match status" value="1"/>
</dbReference>
<comment type="function">
    <text evidence="1">Component of the proteasome core, a large protease complex with broad specificity involved in protein degradation.</text>
</comment>
<comment type="catalytic activity">
    <reaction evidence="1">
        <text>Cleavage of peptide bonds with very broad specificity.</text>
        <dbReference type="EC" id="3.4.25.1"/>
    </reaction>
</comment>
<comment type="activity regulation">
    <text evidence="1">The formation of the proteasomal ATPase PAN-20S proteasome complex, via the docking of the C-termini of PAN into the intersubunit pockets in the alpha-rings, triggers opening of the gate for substrate entry. Interconversion between the open-gate and close-gate conformations leads to a dynamic regulation of the 20S proteasome proteolysis activity.</text>
</comment>
<comment type="subunit">
    <text evidence="1">The 20S proteasome core is composed of 14 alpha and 14 beta subunits that assemble into four stacked heptameric rings, resulting in a barrel-shaped structure. The two inner rings, each composed of seven catalytic beta subunits, are sandwiched by two outer rings, each composed of seven alpha subunits. The catalytic chamber with the active sites is on the inside of the barrel. Has a gated structure, the ends of the cylinder being occluded by the N-termini of the alpha-subunits. Is capped at one or both ends by the proteasome regulatory ATPase, PAN.</text>
</comment>
<comment type="subcellular location">
    <subcellularLocation>
        <location evidence="1">Cytoplasm</location>
    </subcellularLocation>
</comment>
<comment type="similarity">
    <text evidence="1">Belongs to the peptidase T1B family.</text>
</comment>